<keyword id="KW-0238">DNA-binding</keyword>
<keyword id="KW-0804">Transcription</keyword>
<keyword id="KW-0805">Transcription regulation</keyword>
<name>ARGP_SALEP</name>
<comment type="function">
    <text evidence="1">Controls the transcription of genes involved in arginine and lysine metabolism.</text>
</comment>
<comment type="subunit">
    <text evidence="1">Homodimer.</text>
</comment>
<comment type="similarity">
    <text evidence="2">Belongs to the LysR transcriptional regulatory family.</text>
</comment>
<protein>
    <recommendedName>
        <fullName evidence="1">HTH-type transcriptional regulator ArgP</fullName>
    </recommendedName>
</protein>
<reference key="1">
    <citation type="journal article" date="2008" name="Genome Res.">
        <title>Comparative genome analysis of Salmonella enteritidis PT4 and Salmonella gallinarum 287/91 provides insights into evolutionary and host adaptation pathways.</title>
        <authorList>
            <person name="Thomson N.R."/>
            <person name="Clayton D.J."/>
            <person name="Windhorst D."/>
            <person name="Vernikos G."/>
            <person name="Davidson S."/>
            <person name="Churcher C."/>
            <person name="Quail M.A."/>
            <person name="Stevens M."/>
            <person name="Jones M.A."/>
            <person name="Watson M."/>
            <person name="Barron A."/>
            <person name="Layton A."/>
            <person name="Pickard D."/>
            <person name="Kingsley R.A."/>
            <person name="Bignell A."/>
            <person name="Clark L."/>
            <person name="Harris B."/>
            <person name="Ormond D."/>
            <person name="Abdellah Z."/>
            <person name="Brooks K."/>
            <person name="Cherevach I."/>
            <person name="Chillingworth T."/>
            <person name="Woodward J."/>
            <person name="Norberczak H."/>
            <person name="Lord A."/>
            <person name="Arrowsmith C."/>
            <person name="Jagels K."/>
            <person name="Moule S."/>
            <person name="Mungall K."/>
            <person name="Saunders M."/>
            <person name="Whitehead S."/>
            <person name="Chabalgoity J.A."/>
            <person name="Maskell D."/>
            <person name="Humphreys T."/>
            <person name="Roberts M."/>
            <person name="Barrow P.A."/>
            <person name="Dougan G."/>
            <person name="Parkhill J."/>
        </authorList>
    </citation>
    <scope>NUCLEOTIDE SEQUENCE [LARGE SCALE GENOMIC DNA]</scope>
    <source>
        <strain>P125109</strain>
    </source>
</reference>
<gene>
    <name evidence="1" type="primary">argP</name>
    <name type="synonym">iciA</name>
    <name type="ordered locus">SEN2907</name>
</gene>
<proteinExistence type="inferred from homology"/>
<organism>
    <name type="scientific">Salmonella enteritidis PT4 (strain P125109)</name>
    <dbReference type="NCBI Taxonomy" id="550537"/>
    <lineage>
        <taxon>Bacteria</taxon>
        <taxon>Pseudomonadati</taxon>
        <taxon>Pseudomonadota</taxon>
        <taxon>Gammaproteobacteria</taxon>
        <taxon>Enterobacterales</taxon>
        <taxon>Enterobacteriaceae</taxon>
        <taxon>Salmonella</taxon>
    </lineage>
</organism>
<sequence>MKRPDYRTLQALDAVIRERGFERAAQKLCITQSAVSQRIKQLENMFGQPLLVRTVPPRPTEQGQKLLALLRQVELLEEEWLGDEQTGSTPLLLSLAVNADSLATWLLPALAPVLADSPIRLNLQVEDETRTQERLRRGEVVGAVSIQHQALPSCLVDKLGALDYLFVASRPFAERYFPNGVTRSSLLKAPAVAFDHLDDMHQAFLQQNFDLPPGSVPCHIVNSSEAFVQLARQGTTCCMIPHLQIEKELESGELINLTPGLLQRRMLYWHRFAPESRMMRKVTDALLEYGHKVLRQD</sequence>
<feature type="chain" id="PRO_1000127280" description="HTH-type transcriptional regulator ArgP">
    <location>
        <begin position="1"/>
        <end position="297"/>
    </location>
</feature>
<feature type="domain" description="HTH lysR-type" evidence="1">
    <location>
        <begin position="4"/>
        <end position="60"/>
    </location>
</feature>
<feature type="DNA-binding region" description="H-T-H motif" evidence="1">
    <location>
        <begin position="21"/>
        <end position="40"/>
    </location>
</feature>
<dbReference type="EMBL" id="AM933172">
    <property type="protein sequence ID" value="CAR34485.1"/>
    <property type="molecule type" value="Genomic_DNA"/>
</dbReference>
<dbReference type="RefSeq" id="WP_000828348.1">
    <property type="nucleotide sequence ID" value="NC_011294.1"/>
</dbReference>
<dbReference type="SMR" id="B5QXJ1"/>
<dbReference type="KEGG" id="set:SEN2907"/>
<dbReference type="HOGENOM" id="CLU_063829_0_0_6"/>
<dbReference type="Proteomes" id="UP000000613">
    <property type="component" value="Chromosome"/>
</dbReference>
<dbReference type="GO" id="GO:0003677">
    <property type="term" value="F:DNA binding"/>
    <property type="evidence" value="ECO:0007669"/>
    <property type="project" value="UniProtKB-UniRule"/>
</dbReference>
<dbReference type="GO" id="GO:0003700">
    <property type="term" value="F:DNA-binding transcription factor activity"/>
    <property type="evidence" value="ECO:0007669"/>
    <property type="project" value="UniProtKB-UniRule"/>
</dbReference>
<dbReference type="CDD" id="cd08428">
    <property type="entry name" value="PBP2_IciA_ArgP"/>
    <property type="match status" value="1"/>
</dbReference>
<dbReference type="FunFam" id="1.10.10.10:FF:000061">
    <property type="entry name" value="HTH-type transcriptional regulator ArgP"/>
    <property type="match status" value="1"/>
</dbReference>
<dbReference type="FunFam" id="3.40.190.290:FF:000002">
    <property type="entry name" value="HTH-type transcriptional regulator ArgP"/>
    <property type="match status" value="1"/>
</dbReference>
<dbReference type="Gene3D" id="3.40.190.290">
    <property type="match status" value="1"/>
</dbReference>
<dbReference type="Gene3D" id="1.10.10.10">
    <property type="entry name" value="Winged helix-like DNA-binding domain superfamily/Winged helix DNA-binding domain"/>
    <property type="match status" value="1"/>
</dbReference>
<dbReference type="HAMAP" id="MF_00513">
    <property type="entry name" value="HTH_type_ArgP"/>
    <property type="match status" value="1"/>
</dbReference>
<dbReference type="InterPro" id="IPR017685">
    <property type="entry name" value="ArgP"/>
</dbReference>
<dbReference type="InterPro" id="IPR023490">
    <property type="entry name" value="ArgP_gammaproteobact"/>
</dbReference>
<dbReference type="InterPro" id="IPR050176">
    <property type="entry name" value="LTTR"/>
</dbReference>
<dbReference type="InterPro" id="IPR005119">
    <property type="entry name" value="LysR_subst-bd"/>
</dbReference>
<dbReference type="InterPro" id="IPR000847">
    <property type="entry name" value="Tscrpt_reg_HTH_LysR"/>
</dbReference>
<dbReference type="InterPro" id="IPR036388">
    <property type="entry name" value="WH-like_DNA-bd_sf"/>
</dbReference>
<dbReference type="InterPro" id="IPR036390">
    <property type="entry name" value="WH_DNA-bd_sf"/>
</dbReference>
<dbReference type="NCBIfam" id="TIGR03298">
    <property type="entry name" value="argP"/>
    <property type="match status" value="1"/>
</dbReference>
<dbReference type="NCBIfam" id="NF002964">
    <property type="entry name" value="PRK03635.1"/>
    <property type="match status" value="1"/>
</dbReference>
<dbReference type="NCBIfam" id="NF009888">
    <property type="entry name" value="PRK13348.1"/>
    <property type="match status" value="1"/>
</dbReference>
<dbReference type="PANTHER" id="PTHR30579:SF2">
    <property type="entry name" value="HTH-TYPE TRANSCRIPTIONAL REGULATOR ARGP"/>
    <property type="match status" value="1"/>
</dbReference>
<dbReference type="PANTHER" id="PTHR30579">
    <property type="entry name" value="TRANSCRIPTIONAL REGULATOR"/>
    <property type="match status" value="1"/>
</dbReference>
<dbReference type="Pfam" id="PF00126">
    <property type="entry name" value="HTH_1"/>
    <property type="match status" value="1"/>
</dbReference>
<dbReference type="Pfam" id="PF03466">
    <property type="entry name" value="LysR_substrate"/>
    <property type="match status" value="1"/>
</dbReference>
<dbReference type="PRINTS" id="PR00039">
    <property type="entry name" value="HTHLYSR"/>
</dbReference>
<dbReference type="SUPFAM" id="SSF53850">
    <property type="entry name" value="Periplasmic binding protein-like II"/>
    <property type="match status" value="1"/>
</dbReference>
<dbReference type="SUPFAM" id="SSF46785">
    <property type="entry name" value="Winged helix' DNA-binding domain"/>
    <property type="match status" value="1"/>
</dbReference>
<dbReference type="PROSITE" id="PS50931">
    <property type="entry name" value="HTH_LYSR"/>
    <property type="match status" value="1"/>
</dbReference>
<accession>B5QXJ1</accession>
<evidence type="ECO:0000255" key="1">
    <source>
        <dbReference type="HAMAP-Rule" id="MF_00513"/>
    </source>
</evidence>
<evidence type="ECO:0000305" key="2"/>